<evidence type="ECO:0000255" key="1">
    <source>
        <dbReference type="HAMAP-Rule" id="MF_00361"/>
    </source>
</evidence>
<keyword id="KW-0067">ATP-binding</keyword>
<keyword id="KW-0963">Cytoplasm</keyword>
<keyword id="KW-0418">Kinase</keyword>
<keyword id="KW-0520">NAD</keyword>
<keyword id="KW-0521">NADP</keyword>
<keyword id="KW-0547">Nucleotide-binding</keyword>
<keyword id="KW-1185">Reference proteome</keyword>
<keyword id="KW-0808">Transferase</keyword>
<gene>
    <name evidence="1" type="primary">nadK</name>
    <name type="ordered locus">Ctha_1131</name>
</gene>
<reference key="1">
    <citation type="submission" date="2008-06" db="EMBL/GenBank/DDBJ databases">
        <title>Complete sequence of Chloroherpeton thalassium ATCC 35110.</title>
        <authorList>
            <consortium name="US DOE Joint Genome Institute"/>
            <person name="Lucas S."/>
            <person name="Copeland A."/>
            <person name="Lapidus A."/>
            <person name="Glavina del Rio T."/>
            <person name="Dalin E."/>
            <person name="Tice H."/>
            <person name="Bruce D."/>
            <person name="Goodwin L."/>
            <person name="Pitluck S."/>
            <person name="Schmutz J."/>
            <person name="Larimer F."/>
            <person name="Land M."/>
            <person name="Hauser L."/>
            <person name="Kyrpides N."/>
            <person name="Mikhailova N."/>
            <person name="Liu Z."/>
            <person name="Li T."/>
            <person name="Zhao F."/>
            <person name="Overmann J."/>
            <person name="Bryant D.A."/>
            <person name="Richardson P."/>
        </authorList>
    </citation>
    <scope>NUCLEOTIDE SEQUENCE [LARGE SCALE GENOMIC DNA]</scope>
    <source>
        <strain>ATCC 35110 / GB-78</strain>
    </source>
</reference>
<organism>
    <name type="scientific">Chloroherpeton thalassium (strain ATCC 35110 / GB-78)</name>
    <dbReference type="NCBI Taxonomy" id="517418"/>
    <lineage>
        <taxon>Bacteria</taxon>
        <taxon>Pseudomonadati</taxon>
        <taxon>Chlorobiota</taxon>
        <taxon>Chlorobiia</taxon>
        <taxon>Chlorobiales</taxon>
        <taxon>Chloroherpetonaceae</taxon>
        <taxon>Chloroherpeton</taxon>
    </lineage>
</organism>
<feature type="chain" id="PRO_1000120842" description="NAD kinase">
    <location>
        <begin position="1"/>
        <end position="283"/>
    </location>
</feature>
<feature type="active site" description="Proton acceptor" evidence="1">
    <location>
        <position position="66"/>
    </location>
</feature>
<feature type="binding site" evidence="1">
    <location>
        <begin position="66"/>
        <end position="67"/>
    </location>
    <ligand>
        <name>NAD(+)</name>
        <dbReference type="ChEBI" id="CHEBI:57540"/>
    </ligand>
</feature>
<feature type="binding site" evidence="1">
    <location>
        <begin position="137"/>
        <end position="138"/>
    </location>
    <ligand>
        <name>NAD(+)</name>
        <dbReference type="ChEBI" id="CHEBI:57540"/>
    </ligand>
</feature>
<feature type="binding site" evidence="1">
    <location>
        <position position="165"/>
    </location>
    <ligand>
        <name>NAD(+)</name>
        <dbReference type="ChEBI" id="CHEBI:57540"/>
    </ligand>
</feature>
<feature type="binding site" evidence="1">
    <location>
        <position position="167"/>
    </location>
    <ligand>
        <name>NAD(+)</name>
        <dbReference type="ChEBI" id="CHEBI:57540"/>
    </ligand>
</feature>
<feature type="binding site" evidence="1">
    <location>
        <begin position="178"/>
        <end position="183"/>
    </location>
    <ligand>
        <name>NAD(+)</name>
        <dbReference type="ChEBI" id="CHEBI:57540"/>
    </ligand>
</feature>
<comment type="function">
    <text evidence="1">Involved in the regulation of the intracellular balance of NAD and NADP, and is a key enzyme in the biosynthesis of NADP. Catalyzes specifically the phosphorylation on 2'-hydroxyl of the adenosine moiety of NAD to yield NADP.</text>
</comment>
<comment type="catalytic activity">
    <reaction evidence="1">
        <text>NAD(+) + ATP = ADP + NADP(+) + H(+)</text>
        <dbReference type="Rhea" id="RHEA:18629"/>
        <dbReference type="ChEBI" id="CHEBI:15378"/>
        <dbReference type="ChEBI" id="CHEBI:30616"/>
        <dbReference type="ChEBI" id="CHEBI:57540"/>
        <dbReference type="ChEBI" id="CHEBI:58349"/>
        <dbReference type="ChEBI" id="CHEBI:456216"/>
        <dbReference type="EC" id="2.7.1.23"/>
    </reaction>
</comment>
<comment type="cofactor">
    <cofactor evidence="1">
        <name>a divalent metal cation</name>
        <dbReference type="ChEBI" id="CHEBI:60240"/>
    </cofactor>
</comment>
<comment type="subcellular location">
    <subcellularLocation>
        <location evidence="1">Cytoplasm</location>
    </subcellularLocation>
</comment>
<comment type="similarity">
    <text evidence="1">Belongs to the NAD kinase family.</text>
</comment>
<protein>
    <recommendedName>
        <fullName evidence="1">NAD kinase</fullName>
        <ecNumber evidence="1">2.7.1.23</ecNumber>
    </recommendedName>
    <alternativeName>
        <fullName evidence="1">ATP-dependent NAD kinase</fullName>
    </alternativeName>
</protein>
<dbReference type="EC" id="2.7.1.23" evidence="1"/>
<dbReference type="EMBL" id="CP001100">
    <property type="protein sequence ID" value="ACF13595.1"/>
    <property type="molecule type" value="Genomic_DNA"/>
</dbReference>
<dbReference type="RefSeq" id="WP_012499679.1">
    <property type="nucleotide sequence ID" value="NC_011026.1"/>
</dbReference>
<dbReference type="SMR" id="B3QYG7"/>
<dbReference type="STRING" id="517418.Ctha_1131"/>
<dbReference type="KEGG" id="cts:Ctha_1131"/>
<dbReference type="eggNOG" id="COG0061">
    <property type="taxonomic scope" value="Bacteria"/>
</dbReference>
<dbReference type="HOGENOM" id="CLU_008831_0_1_10"/>
<dbReference type="OrthoDB" id="9774737at2"/>
<dbReference type="Proteomes" id="UP000001208">
    <property type="component" value="Chromosome"/>
</dbReference>
<dbReference type="GO" id="GO:0005737">
    <property type="term" value="C:cytoplasm"/>
    <property type="evidence" value="ECO:0007669"/>
    <property type="project" value="UniProtKB-SubCell"/>
</dbReference>
<dbReference type="GO" id="GO:0005524">
    <property type="term" value="F:ATP binding"/>
    <property type="evidence" value="ECO:0007669"/>
    <property type="project" value="UniProtKB-KW"/>
</dbReference>
<dbReference type="GO" id="GO:0046872">
    <property type="term" value="F:metal ion binding"/>
    <property type="evidence" value="ECO:0007669"/>
    <property type="project" value="UniProtKB-UniRule"/>
</dbReference>
<dbReference type="GO" id="GO:0051287">
    <property type="term" value="F:NAD binding"/>
    <property type="evidence" value="ECO:0007669"/>
    <property type="project" value="UniProtKB-ARBA"/>
</dbReference>
<dbReference type="GO" id="GO:0003951">
    <property type="term" value="F:NAD+ kinase activity"/>
    <property type="evidence" value="ECO:0007669"/>
    <property type="project" value="UniProtKB-UniRule"/>
</dbReference>
<dbReference type="GO" id="GO:0019674">
    <property type="term" value="P:NAD metabolic process"/>
    <property type="evidence" value="ECO:0007669"/>
    <property type="project" value="InterPro"/>
</dbReference>
<dbReference type="GO" id="GO:0006741">
    <property type="term" value="P:NADP biosynthetic process"/>
    <property type="evidence" value="ECO:0007669"/>
    <property type="project" value="UniProtKB-UniRule"/>
</dbReference>
<dbReference type="Gene3D" id="3.40.50.10330">
    <property type="entry name" value="Probable inorganic polyphosphate/atp-NAD kinase, domain 1"/>
    <property type="match status" value="1"/>
</dbReference>
<dbReference type="Gene3D" id="2.60.200.30">
    <property type="entry name" value="Probable inorganic polyphosphate/atp-NAD kinase, domain 2"/>
    <property type="match status" value="1"/>
</dbReference>
<dbReference type="HAMAP" id="MF_00361">
    <property type="entry name" value="NAD_kinase"/>
    <property type="match status" value="1"/>
</dbReference>
<dbReference type="InterPro" id="IPR017438">
    <property type="entry name" value="ATP-NAD_kinase_N"/>
</dbReference>
<dbReference type="InterPro" id="IPR017437">
    <property type="entry name" value="ATP-NAD_kinase_PpnK-typ_C"/>
</dbReference>
<dbReference type="InterPro" id="IPR016064">
    <property type="entry name" value="NAD/diacylglycerol_kinase_sf"/>
</dbReference>
<dbReference type="InterPro" id="IPR002504">
    <property type="entry name" value="NADK"/>
</dbReference>
<dbReference type="PANTHER" id="PTHR20275">
    <property type="entry name" value="NAD KINASE"/>
    <property type="match status" value="1"/>
</dbReference>
<dbReference type="PANTHER" id="PTHR20275:SF0">
    <property type="entry name" value="NAD KINASE"/>
    <property type="match status" value="1"/>
</dbReference>
<dbReference type="Pfam" id="PF01513">
    <property type="entry name" value="NAD_kinase"/>
    <property type="match status" value="1"/>
</dbReference>
<dbReference type="Pfam" id="PF20143">
    <property type="entry name" value="NAD_kinase_C"/>
    <property type="match status" value="1"/>
</dbReference>
<dbReference type="SUPFAM" id="SSF111331">
    <property type="entry name" value="NAD kinase/diacylglycerol kinase-like"/>
    <property type="match status" value="1"/>
</dbReference>
<name>NADK_CHLT3</name>
<sequence>MKFGIVVNTNRPRAIAAGKELISWMRKEQIDFVLDANSAENLKESPSVEMENMHEQADFFVSLGGDGTLLGVSHFSNTKPIIGINLGRLGFLAEFCEHEMYDVIKRVLQNNFMLENRTQLEVSVSGKGQVRNFTGLNDVVIEKGTYPGVPVISVSIDNNLVSEYRADGVIIATSTGSTGYSLSAGGPIIIPKSKVFVVTPVCPHMLTVRPMVICDDKEIEVRVETPGDRFVLNCDGMLIQNISPSHQIRVRKAKNTVNLIANERRNYYNVLRQKFHWGKEQES</sequence>
<accession>B3QYG7</accession>
<proteinExistence type="inferred from homology"/>